<dbReference type="EMBL" id="AL591688">
    <property type="protein sequence ID" value="CAC45926.1"/>
    <property type="molecule type" value="Genomic_DNA"/>
</dbReference>
<dbReference type="RefSeq" id="NP_385453.1">
    <property type="nucleotide sequence ID" value="NC_003047.1"/>
</dbReference>
<dbReference type="RefSeq" id="WP_003536194.1">
    <property type="nucleotide sequence ID" value="NC_003047.1"/>
</dbReference>
<dbReference type="SMR" id="Q92QH8"/>
<dbReference type="EnsemblBacteria" id="CAC45926">
    <property type="protein sequence ID" value="CAC45926"/>
    <property type="gene ID" value="SMc01318"/>
</dbReference>
<dbReference type="GeneID" id="89575671"/>
<dbReference type="KEGG" id="sme:SMc01318"/>
<dbReference type="PATRIC" id="fig|266834.11.peg.2762"/>
<dbReference type="eggNOG" id="COG0222">
    <property type="taxonomic scope" value="Bacteria"/>
</dbReference>
<dbReference type="HOGENOM" id="CLU_086499_3_0_5"/>
<dbReference type="OrthoDB" id="9811748at2"/>
<dbReference type="Proteomes" id="UP000001976">
    <property type="component" value="Chromosome"/>
</dbReference>
<dbReference type="GO" id="GO:0022625">
    <property type="term" value="C:cytosolic large ribosomal subunit"/>
    <property type="evidence" value="ECO:0007669"/>
    <property type="project" value="TreeGrafter"/>
</dbReference>
<dbReference type="GO" id="GO:0003729">
    <property type="term" value="F:mRNA binding"/>
    <property type="evidence" value="ECO:0007669"/>
    <property type="project" value="TreeGrafter"/>
</dbReference>
<dbReference type="GO" id="GO:0003735">
    <property type="term" value="F:structural constituent of ribosome"/>
    <property type="evidence" value="ECO:0007669"/>
    <property type="project" value="InterPro"/>
</dbReference>
<dbReference type="GO" id="GO:0006412">
    <property type="term" value="P:translation"/>
    <property type="evidence" value="ECO:0007669"/>
    <property type="project" value="UniProtKB-UniRule"/>
</dbReference>
<dbReference type="CDD" id="cd00387">
    <property type="entry name" value="Ribosomal_L7_L12"/>
    <property type="match status" value="1"/>
</dbReference>
<dbReference type="FunFam" id="1.20.5.710:FF:000007">
    <property type="entry name" value="50S ribosomal protein L7/L12"/>
    <property type="match status" value="1"/>
</dbReference>
<dbReference type="FunFam" id="3.30.1390.10:FF:000001">
    <property type="entry name" value="50S ribosomal protein L7/L12"/>
    <property type="match status" value="1"/>
</dbReference>
<dbReference type="Gene3D" id="3.30.1390.10">
    <property type="match status" value="1"/>
</dbReference>
<dbReference type="Gene3D" id="1.20.5.710">
    <property type="entry name" value="Single helix bin"/>
    <property type="match status" value="1"/>
</dbReference>
<dbReference type="HAMAP" id="MF_00368">
    <property type="entry name" value="Ribosomal_bL12"/>
    <property type="match status" value="1"/>
</dbReference>
<dbReference type="InterPro" id="IPR000206">
    <property type="entry name" value="Ribosomal_bL12"/>
</dbReference>
<dbReference type="InterPro" id="IPR013823">
    <property type="entry name" value="Ribosomal_bL12_C"/>
</dbReference>
<dbReference type="InterPro" id="IPR014719">
    <property type="entry name" value="Ribosomal_bL12_C/ClpS-like"/>
</dbReference>
<dbReference type="InterPro" id="IPR008932">
    <property type="entry name" value="Ribosomal_bL12_oligo"/>
</dbReference>
<dbReference type="InterPro" id="IPR036235">
    <property type="entry name" value="Ribosomal_bL12_oligo_N_sf"/>
</dbReference>
<dbReference type="NCBIfam" id="TIGR00855">
    <property type="entry name" value="L12"/>
    <property type="match status" value="1"/>
</dbReference>
<dbReference type="PANTHER" id="PTHR45987">
    <property type="entry name" value="39S RIBOSOMAL PROTEIN L12"/>
    <property type="match status" value="1"/>
</dbReference>
<dbReference type="PANTHER" id="PTHR45987:SF4">
    <property type="entry name" value="LARGE RIBOSOMAL SUBUNIT PROTEIN BL12M"/>
    <property type="match status" value="1"/>
</dbReference>
<dbReference type="Pfam" id="PF00542">
    <property type="entry name" value="Ribosomal_L12"/>
    <property type="match status" value="1"/>
</dbReference>
<dbReference type="Pfam" id="PF16320">
    <property type="entry name" value="Ribosomal_L12_N"/>
    <property type="match status" value="1"/>
</dbReference>
<dbReference type="SUPFAM" id="SSF54736">
    <property type="entry name" value="ClpS-like"/>
    <property type="match status" value="1"/>
</dbReference>
<dbReference type="SUPFAM" id="SSF48300">
    <property type="entry name" value="Ribosomal protein L7/12, oligomerisation (N-terminal) domain"/>
    <property type="match status" value="1"/>
</dbReference>
<keyword id="KW-1185">Reference proteome</keyword>
<keyword id="KW-0687">Ribonucleoprotein</keyword>
<keyword id="KW-0689">Ribosomal protein</keyword>
<protein>
    <recommendedName>
        <fullName evidence="1">Large ribosomal subunit protein bL12</fullName>
    </recommendedName>
    <alternativeName>
        <fullName evidence="2">50S ribosomal protein L7/L12</fullName>
    </alternativeName>
</protein>
<feature type="chain" id="PRO_0000157567" description="Large ribosomal subunit protein bL12">
    <location>
        <begin position="1"/>
        <end position="126"/>
    </location>
</feature>
<accession>Q92QH8</accession>
<organism>
    <name type="scientific">Rhizobium meliloti (strain 1021)</name>
    <name type="common">Ensifer meliloti</name>
    <name type="synonym">Sinorhizobium meliloti</name>
    <dbReference type="NCBI Taxonomy" id="266834"/>
    <lineage>
        <taxon>Bacteria</taxon>
        <taxon>Pseudomonadati</taxon>
        <taxon>Pseudomonadota</taxon>
        <taxon>Alphaproteobacteria</taxon>
        <taxon>Hyphomicrobiales</taxon>
        <taxon>Rhizobiaceae</taxon>
        <taxon>Sinorhizobium/Ensifer group</taxon>
        <taxon>Sinorhizobium</taxon>
    </lineage>
</organism>
<sequence>MADLAKIVEDLSSLTVLEAAELSKLLEEKWGVSAAAPVAVAAAGGAAGAAAPVEEEKTEFDVILTDAGANKINVIKEVRAITGLGLKEAKDLVEGAPKAVKEAVSKAEAADLKKKLEDAGAKVDVK</sequence>
<proteinExistence type="inferred from homology"/>
<gene>
    <name evidence="1" type="primary">rplL</name>
    <name type="ordered locus">R01347</name>
    <name type="ORF">SMc01318</name>
</gene>
<reference key="1">
    <citation type="journal article" date="2001" name="Proc. Natl. Acad. Sci. U.S.A.">
        <title>Analysis of the chromosome sequence of the legume symbiont Sinorhizobium meliloti strain 1021.</title>
        <authorList>
            <person name="Capela D."/>
            <person name="Barloy-Hubler F."/>
            <person name="Gouzy J."/>
            <person name="Bothe G."/>
            <person name="Ampe F."/>
            <person name="Batut J."/>
            <person name="Boistard P."/>
            <person name="Becker A."/>
            <person name="Boutry M."/>
            <person name="Cadieu E."/>
            <person name="Dreano S."/>
            <person name="Gloux S."/>
            <person name="Godrie T."/>
            <person name="Goffeau A."/>
            <person name="Kahn D."/>
            <person name="Kiss E."/>
            <person name="Lelaure V."/>
            <person name="Masuy D."/>
            <person name="Pohl T."/>
            <person name="Portetelle D."/>
            <person name="Puehler A."/>
            <person name="Purnelle B."/>
            <person name="Ramsperger U."/>
            <person name="Renard C."/>
            <person name="Thebault P."/>
            <person name="Vandenbol M."/>
            <person name="Weidner S."/>
            <person name="Galibert F."/>
        </authorList>
    </citation>
    <scope>NUCLEOTIDE SEQUENCE [LARGE SCALE GENOMIC DNA]</scope>
    <source>
        <strain>1021</strain>
    </source>
</reference>
<reference key="2">
    <citation type="journal article" date="2001" name="Science">
        <title>The composite genome of the legume symbiont Sinorhizobium meliloti.</title>
        <authorList>
            <person name="Galibert F."/>
            <person name="Finan T.M."/>
            <person name="Long S.R."/>
            <person name="Puehler A."/>
            <person name="Abola P."/>
            <person name="Ampe F."/>
            <person name="Barloy-Hubler F."/>
            <person name="Barnett M.J."/>
            <person name="Becker A."/>
            <person name="Boistard P."/>
            <person name="Bothe G."/>
            <person name="Boutry M."/>
            <person name="Bowser L."/>
            <person name="Buhrmester J."/>
            <person name="Cadieu E."/>
            <person name="Capela D."/>
            <person name="Chain P."/>
            <person name="Cowie A."/>
            <person name="Davis R.W."/>
            <person name="Dreano S."/>
            <person name="Federspiel N.A."/>
            <person name="Fisher R.F."/>
            <person name="Gloux S."/>
            <person name="Godrie T."/>
            <person name="Goffeau A."/>
            <person name="Golding B."/>
            <person name="Gouzy J."/>
            <person name="Gurjal M."/>
            <person name="Hernandez-Lucas I."/>
            <person name="Hong A."/>
            <person name="Huizar L."/>
            <person name="Hyman R.W."/>
            <person name="Jones T."/>
            <person name="Kahn D."/>
            <person name="Kahn M.L."/>
            <person name="Kalman S."/>
            <person name="Keating D.H."/>
            <person name="Kiss E."/>
            <person name="Komp C."/>
            <person name="Lelaure V."/>
            <person name="Masuy D."/>
            <person name="Palm C."/>
            <person name="Peck M.C."/>
            <person name="Pohl T.M."/>
            <person name="Portetelle D."/>
            <person name="Purnelle B."/>
            <person name="Ramsperger U."/>
            <person name="Surzycki R."/>
            <person name="Thebault P."/>
            <person name="Vandenbol M."/>
            <person name="Vorhoelter F.J."/>
            <person name="Weidner S."/>
            <person name="Wells D.H."/>
            <person name="Wong K."/>
            <person name="Yeh K.-C."/>
            <person name="Batut J."/>
        </authorList>
    </citation>
    <scope>NUCLEOTIDE SEQUENCE [LARGE SCALE GENOMIC DNA]</scope>
    <source>
        <strain>1021</strain>
    </source>
</reference>
<comment type="function">
    <text evidence="1">Forms part of the ribosomal stalk which helps the ribosome interact with GTP-bound translation factors. Is thus essential for accurate translation.</text>
</comment>
<comment type="subunit">
    <text evidence="1">Homodimer. Part of the ribosomal stalk of the 50S ribosomal subunit. Forms a multimeric L10(L12)X complex, where L10 forms an elongated spine to which 2 to 4 L12 dimers bind in a sequential fashion. Binds GTP-bound translation factors.</text>
</comment>
<comment type="similarity">
    <text evidence="1">Belongs to the bacterial ribosomal protein bL12 family.</text>
</comment>
<evidence type="ECO:0000255" key="1">
    <source>
        <dbReference type="HAMAP-Rule" id="MF_00368"/>
    </source>
</evidence>
<evidence type="ECO:0000305" key="2"/>
<name>RL7_RHIME</name>